<evidence type="ECO:0000255" key="1">
    <source>
        <dbReference type="HAMAP-Rule" id="MF_00651"/>
    </source>
</evidence>
<feature type="chain" id="PRO_1000061524" description="Putative pre-16S rRNA nuclease">
    <location>
        <begin position="1"/>
        <end position="141"/>
    </location>
</feature>
<gene>
    <name type="ordered locus">HS_0010</name>
</gene>
<comment type="function">
    <text evidence="1">Could be a nuclease involved in processing of the 5'-end of pre-16S rRNA.</text>
</comment>
<comment type="subcellular location">
    <subcellularLocation>
        <location evidence="1">Cytoplasm</location>
    </subcellularLocation>
</comment>
<comment type="similarity">
    <text evidence="1">Belongs to the YqgF nuclease family.</text>
</comment>
<name>YQGF_HISS1</name>
<proteinExistence type="inferred from homology"/>
<accession>Q0I1B3</accession>
<protein>
    <recommendedName>
        <fullName evidence="1">Putative pre-16S rRNA nuclease</fullName>
        <ecNumber evidence="1">3.1.-.-</ecNumber>
    </recommendedName>
</protein>
<keyword id="KW-0963">Cytoplasm</keyword>
<keyword id="KW-0378">Hydrolase</keyword>
<keyword id="KW-0540">Nuclease</keyword>
<keyword id="KW-0690">Ribosome biogenesis</keyword>
<dbReference type="EC" id="3.1.-.-" evidence="1"/>
<dbReference type="EMBL" id="CP000436">
    <property type="protein sequence ID" value="ABI24291.1"/>
    <property type="molecule type" value="Genomic_DNA"/>
</dbReference>
<dbReference type="SMR" id="Q0I1B3"/>
<dbReference type="KEGG" id="hso:HS_0010"/>
<dbReference type="eggNOG" id="COG0816">
    <property type="taxonomic scope" value="Bacteria"/>
</dbReference>
<dbReference type="HOGENOM" id="CLU_098240_3_0_6"/>
<dbReference type="GO" id="GO:0005829">
    <property type="term" value="C:cytosol"/>
    <property type="evidence" value="ECO:0007669"/>
    <property type="project" value="TreeGrafter"/>
</dbReference>
<dbReference type="GO" id="GO:0004518">
    <property type="term" value="F:nuclease activity"/>
    <property type="evidence" value="ECO:0007669"/>
    <property type="project" value="UniProtKB-KW"/>
</dbReference>
<dbReference type="GO" id="GO:0000967">
    <property type="term" value="P:rRNA 5'-end processing"/>
    <property type="evidence" value="ECO:0007669"/>
    <property type="project" value="UniProtKB-UniRule"/>
</dbReference>
<dbReference type="CDD" id="cd16964">
    <property type="entry name" value="YqgF"/>
    <property type="match status" value="1"/>
</dbReference>
<dbReference type="FunFam" id="3.30.420.140:FF:000002">
    <property type="entry name" value="Putative pre-16S rRNA nuclease"/>
    <property type="match status" value="1"/>
</dbReference>
<dbReference type="Gene3D" id="3.30.420.140">
    <property type="entry name" value="YqgF/RNase H-like domain"/>
    <property type="match status" value="1"/>
</dbReference>
<dbReference type="HAMAP" id="MF_00651">
    <property type="entry name" value="Nuclease_YqgF"/>
    <property type="match status" value="1"/>
</dbReference>
<dbReference type="InterPro" id="IPR012337">
    <property type="entry name" value="RNaseH-like_sf"/>
</dbReference>
<dbReference type="InterPro" id="IPR005227">
    <property type="entry name" value="YqgF"/>
</dbReference>
<dbReference type="InterPro" id="IPR006641">
    <property type="entry name" value="YqgF/RNaseH-like_dom"/>
</dbReference>
<dbReference type="InterPro" id="IPR037027">
    <property type="entry name" value="YqgF/RNaseH-like_dom_sf"/>
</dbReference>
<dbReference type="NCBIfam" id="TIGR00250">
    <property type="entry name" value="RNAse_H_YqgF"/>
    <property type="match status" value="1"/>
</dbReference>
<dbReference type="PANTHER" id="PTHR33317">
    <property type="entry name" value="POLYNUCLEOTIDYL TRANSFERASE, RIBONUCLEASE H-LIKE SUPERFAMILY PROTEIN"/>
    <property type="match status" value="1"/>
</dbReference>
<dbReference type="PANTHER" id="PTHR33317:SF4">
    <property type="entry name" value="POLYNUCLEOTIDYL TRANSFERASE, RIBONUCLEASE H-LIKE SUPERFAMILY PROTEIN"/>
    <property type="match status" value="1"/>
</dbReference>
<dbReference type="Pfam" id="PF03652">
    <property type="entry name" value="RuvX"/>
    <property type="match status" value="1"/>
</dbReference>
<dbReference type="SMART" id="SM00732">
    <property type="entry name" value="YqgFc"/>
    <property type="match status" value="1"/>
</dbReference>
<dbReference type="SUPFAM" id="SSF53098">
    <property type="entry name" value="Ribonuclease H-like"/>
    <property type="match status" value="1"/>
</dbReference>
<organism>
    <name type="scientific">Histophilus somni (strain 129Pt)</name>
    <name type="common">Haemophilus somnus</name>
    <dbReference type="NCBI Taxonomy" id="205914"/>
    <lineage>
        <taxon>Bacteria</taxon>
        <taxon>Pseudomonadati</taxon>
        <taxon>Pseudomonadota</taxon>
        <taxon>Gammaproteobacteria</taxon>
        <taxon>Pasteurellales</taxon>
        <taxon>Pasteurellaceae</taxon>
        <taxon>Histophilus</taxon>
    </lineage>
</organism>
<reference key="1">
    <citation type="journal article" date="2007" name="J. Bacteriol.">
        <title>Complete genome sequence of Haemophilus somnus (Histophilus somni) strain 129Pt and comparison to Haemophilus ducreyi 35000HP and Haemophilus influenzae Rd.</title>
        <authorList>
            <person name="Challacombe J.F."/>
            <person name="Duncan A.J."/>
            <person name="Brettin T.S."/>
            <person name="Bruce D."/>
            <person name="Chertkov O."/>
            <person name="Detter J.C."/>
            <person name="Han C.S."/>
            <person name="Misra M."/>
            <person name="Richardson P."/>
            <person name="Tapia R."/>
            <person name="Thayer N."/>
            <person name="Xie G."/>
            <person name="Inzana T.J."/>
        </authorList>
    </citation>
    <scope>NUCLEOTIDE SEQUENCE [LARGE SCALE GENOMIC DNA]</scope>
    <source>
        <strain>129Pt</strain>
    </source>
</reference>
<sequence>MSITVLAFDFGTKSIGCAVGQSITGTAQALPAFKAQDGIPDWLKIEKCLKDWQPNIVVVGLPLNMDGSEQDLTHLARKFANRLNGRFGVKVELQDERLTTKQARDEIFQRGGYRALKKEKVDSISACLILESWFENGACGE</sequence>